<reference key="1">
    <citation type="journal article" date="2000" name="Eur. J. Biochem.">
        <title>Peptides with antimicrobial activity from four different families isolated from the skins of the North American frogs Rana luteiventris, Rana berlandieri and Rana pipiens.</title>
        <authorList>
            <person name="Goraya J."/>
            <person name="Wang Y."/>
            <person name="Li Z."/>
            <person name="O'Flaherty M."/>
            <person name="Knoop F.C."/>
            <person name="Platz J.E."/>
            <person name="Conlon J.M."/>
        </authorList>
    </citation>
    <scope>PROTEIN SEQUENCE</scope>
    <scope>FUNCTION</scope>
    <scope>MASS SPECTROMETRY</scope>
    <source>
        <tissue>Skin secretion</tissue>
    </source>
</reference>
<name>BR1F_LITBE</name>
<keyword id="KW-0878">Amphibian defense peptide</keyword>
<keyword id="KW-0044">Antibiotic</keyword>
<keyword id="KW-0929">Antimicrobial</keyword>
<keyword id="KW-0903">Direct protein sequencing</keyword>
<keyword id="KW-1015">Disulfide bond</keyword>
<keyword id="KW-0964">Secreted</keyword>
<organism>
    <name type="scientific">Lithobates berlandieri</name>
    <name type="common">Rio Grande leopard frog</name>
    <name type="synonym">Rana berlandieri</name>
    <dbReference type="NCBI Taxonomy" id="30360"/>
    <lineage>
        <taxon>Eukaryota</taxon>
        <taxon>Metazoa</taxon>
        <taxon>Chordata</taxon>
        <taxon>Craniata</taxon>
        <taxon>Vertebrata</taxon>
        <taxon>Euteleostomi</taxon>
        <taxon>Amphibia</taxon>
        <taxon>Batrachia</taxon>
        <taxon>Anura</taxon>
        <taxon>Neobatrachia</taxon>
        <taxon>Ranoidea</taxon>
        <taxon>Ranidae</taxon>
        <taxon>Lithobates</taxon>
    </lineage>
</organism>
<protein>
    <recommendedName>
        <fullName>Brevinin-1Bf</fullName>
    </recommendedName>
</protein>
<dbReference type="GO" id="GO:0005576">
    <property type="term" value="C:extracellular region"/>
    <property type="evidence" value="ECO:0007669"/>
    <property type="project" value="UniProtKB-SubCell"/>
</dbReference>
<dbReference type="GO" id="GO:0042742">
    <property type="term" value="P:defense response to bacterium"/>
    <property type="evidence" value="ECO:0007669"/>
    <property type="project" value="UniProtKB-KW"/>
</dbReference>
<dbReference type="InterPro" id="IPR012520">
    <property type="entry name" value="Antimicrobial_frog_1"/>
</dbReference>
<dbReference type="Pfam" id="PF08018">
    <property type="entry name" value="Antimicrobial_1"/>
    <property type="match status" value="1"/>
</dbReference>
<comment type="function">
    <text evidence="2">Antibacterial activity against Gram-positive bacterium S.aureus and Gram-negative bacterium E.coli.</text>
</comment>
<comment type="subcellular location">
    <subcellularLocation>
        <location>Secreted</location>
    </subcellularLocation>
</comment>
<comment type="tissue specificity">
    <text>Expressed by the skin glands.</text>
</comment>
<comment type="mass spectrometry"/>
<comment type="similarity">
    <text evidence="3">Belongs to the frog skin active peptide (FSAP) family. Brevinin subfamily.</text>
</comment>
<proteinExistence type="evidence at protein level"/>
<evidence type="ECO:0000250" key="1"/>
<evidence type="ECO:0000269" key="2">
    <source>
    </source>
</evidence>
<evidence type="ECO:0000305" key="3"/>
<sequence>FLPFIAGMAANFLPKIFCAISKKC</sequence>
<accession>P82838</accession>
<feature type="peptide" id="PRO_0000043531" description="Brevinin-1Bf">
    <location>
        <begin position="1"/>
        <end position="24"/>
    </location>
</feature>
<feature type="disulfide bond" evidence="1">
    <location>
        <begin position="18"/>
        <end position="24"/>
    </location>
</feature>